<gene>
    <name evidence="1" type="primary">deoC</name>
    <name type="ordered locus">CLK_1039</name>
</gene>
<name>DEOC_CLOBM</name>
<protein>
    <recommendedName>
        <fullName evidence="1">Deoxyribose-phosphate aldolase</fullName>
        <shortName evidence="1">DERA</shortName>
        <ecNumber evidence="1">4.1.2.4</ecNumber>
    </recommendedName>
    <alternativeName>
        <fullName evidence="1">2-deoxy-D-ribose 5-phosphate aldolase</fullName>
    </alternativeName>
    <alternativeName>
        <fullName evidence="1">Phosphodeoxyriboaldolase</fullName>
        <shortName evidence="1">Deoxyriboaldolase</shortName>
    </alternativeName>
</protein>
<reference key="1">
    <citation type="journal article" date="2007" name="PLoS ONE">
        <title>Analysis of the neurotoxin complex genes in Clostridium botulinum A1-A4 and B1 strains: BoNT/A3, /Ba4 and /B1 clusters are located within plasmids.</title>
        <authorList>
            <person name="Smith T.J."/>
            <person name="Hill K.K."/>
            <person name="Foley B.T."/>
            <person name="Detter J.C."/>
            <person name="Munk A.C."/>
            <person name="Bruce D.C."/>
            <person name="Doggett N.A."/>
            <person name="Smith L.A."/>
            <person name="Marks J.D."/>
            <person name="Xie G."/>
            <person name="Brettin T.S."/>
        </authorList>
    </citation>
    <scope>NUCLEOTIDE SEQUENCE [LARGE SCALE GENOMIC DNA]</scope>
    <source>
        <strain>Loch Maree / Type A3</strain>
    </source>
</reference>
<proteinExistence type="inferred from homology"/>
<evidence type="ECO:0000255" key="1">
    <source>
        <dbReference type="HAMAP-Rule" id="MF_00114"/>
    </source>
</evidence>
<sequence>MKLSKYIDHTLLKPQATEKDILKLIEEAKTYDFASVCVNPSWVKLAYENLKDTNVKVCTVVGFPLGATSIASKVYETKVAIEDGADEIDMVIAVGQLKSGNDEYVKEEIKKIVEASKDKLVKVIIETCLLTEEEKVKACTLSKEAGADYVKTSTGFSTGGAKPEDIKLMREAVGKDMGVKASGGIHTREEMEVMIENGATRIGASCGVELVK</sequence>
<dbReference type="EC" id="4.1.2.4" evidence="1"/>
<dbReference type="EMBL" id="CP000962">
    <property type="protein sequence ID" value="ACA53725.1"/>
    <property type="molecule type" value="Genomic_DNA"/>
</dbReference>
<dbReference type="RefSeq" id="WP_012341918.1">
    <property type="nucleotide sequence ID" value="NC_010520.1"/>
</dbReference>
<dbReference type="SMR" id="B1L1S5"/>
<dbReference type="KEGG" id="cbl:CLK_1039"/>
<dbReference type="HOGENOM" id="CLU_053595_0_1_9"/>
<dbReference type="UniPathway" id="UPA00002">
    <property type="reaction ID" value="UER00468"/>
</dbReference>
<dbReference type="GO" id="GO:0005737">
    <property type="term" value="C:cytoplasm"/>
    <property type="evidence" value="ECO:0007669"/>
    <property type="project" value="UniProtKB-SubCell"/>
</dbReference>
<dbReference type="GO" id="GO:0004139">
    <property type="term" value="F:deoxyribose-phosphate aldolase activity"/>
    <property type="evidence" value="ECO:0007669"/>
    <property type="project" value="UniProtKB-UniRule"/>
</dbReference>
<dbReference type="GO" id="GO:0006018">
    <property type="term" value="P:2-deoxyribose 1-phosphate catabolic process"/>
    <property type="evidence" value="ECO:0007669"/>
    <property type="project" value="UniProtKB-UniRule"/>
</dbReference>
<dbReference type="GO" id="GO:0016052">
    <property type="term" value="P:carbohydrate catabolic process"/>
    <property type="evidence" value="ECO:0007669"/>
    <property type="project" value="TreeGrafter"/>
</dbReference>
<dbReference type="GO" id="GO:0009264">
    <property type="term" value="P:deoxyribonucleotide catabolic process"/>
    <property type="evidence" value="ECO:0007669"/>
    <property type="project" value="InterPro"/>
</dbReference>
<dbReference type="CDD" id="cd00959">
    <property type="entry name" value="DeoC"/>
    <property type="match status" value="1"/>
</dbReference>
<dbReference type="FunFam" id="3.20.20.70:FF:000044">
    <property type="entry name" value="Deoxyribose-phosphate aldolase"/>
    <property type="match status" value="1"/>
</dbReference>
<dbReference type="Gene3D" id="3.20.20.70">
    <property type="entry name" value="Aldolase class I"/>
    <property type="match status" value="1"/>
</dbReference>
<dbReference type="HAMAP" id="MF_00114">
    <property type="entry name" value="DeoC_type1"/>
    <property type="match status" value="1"/>
</dbReference>
<dbReference type="InterPro" id="IPR013785">
    <property type="entry name" value="Aldolase_TIM"/>
</dbReference>
<dbReference type="InterPro" id="IPR011343">
    <property type="entry name" value="DeoC"/>
</dbReference>
<dbReference type="InterPro" id="IPR002915">
    <property type="entry name" value="DeoC/FbaB/LacD_aldolase"/>
</dbReference>
<dbReference type="InterPro" id="IPR028581">
    <property type="entry name" value="DeoC_typeI"/>
</dbReference>
<dbReference type="NCBIfam" id="TIGR00126">
    <property type="entry name" value="deoC"/>
    <property type="match status" value="1"/>
</dbReference>
<dbReference type="PANTHER" id="PTHR10889">
    <property type="entry name" value="DEOXYRIBOSE-PHOSPHATE ALDOLASE"/>
    <property type="match status" value="1"/>
</dbReference>
<dbReference type="PANTHER" id="PTHR10889:SF1">
    <property type="entry name" value="DEOXYRIBOSE-PHOSPHATE ALDOLASE"/>
    <property type="match status" value="1"/>
</dbReference>
<dbReference type="Pfam" id="PF01791">
    <property type="entry name" value="DeoC"/>
    <property type="match status" value="1"/>
</dbReference>
<dbReference type="PIRSF" id="PIRSF001357">
    <property type="entry name" value="DeoC"/>
    <property type="match status" value="1"/>
</dbReference>
<dbReference type="SMART" id="SM01133">
    <property type="entry name" value="DeoC"/>
    <property type="match status" value="1"/>
</dbReference>
<dbReference type="SUPFAM" id="SSF51569">
    <property type="entry name" value="Aldolase"/>
    <property type="match status" value="1"/>
</dbReference>
<comment type="function">
    <text evidence="1">Catalyzes a reversible aldol reaction between acetaldehyde and D-glyceraldehyde 3-phosphate to generate 2-deoxy-D-ribose 5-phosphate.</text>
</comment>
<comment type="catalytic activity">
    <reaction evidence="1">
        <text>2-deoxy-D-ribose 5-phosphate = D-glyceraldehyde 3-phosphate + acetaldehyde</text>
        <dbReference type="Rhea" id="RHEA:12821"/>
        <dbReference type="ChEBI" id="CHEBI:15343"/>
        <dbReference type="ChEBI" id="CHEBI:59776"/>
        <dbReference type="ChEBI" id="CHEBI:62877"/>
        <dbReference type="EC" id="4.1.2.4"/>
    </reaction>
</comment>
<comment type="pathway">
    <text evidence="1">Carbohydrate degradation; 2-deoxy-D-ribose 1-phosphate degradation; D-glyceraldehyde 3-phosphate and acetaldehyde from 2-deoxy-alpha-D-ribose 1-phosphate: step 2/2.</text>
</comment>
<comment type="subcellular location">
    <subcellularLocation>
        <location evidence="1">Cytoplasm</location>
    </subcellularLocation>
</comment>
<comment type="similarity">
    <text evidence="1">Belongs to the DeoC/FbaB aldolase family. DeoC type 1 subfamily.</text>
</comment>
<accession>B1L1S5</accession>
<feature type="chain" id="PRO_1000094842" description="Deoxyribose-phosphate aldolase">
    <location>
        <begin position="1"/>
        <end position="212"/>
    </location>
</feature>
<feature type="active site" description="Proton donor/acceptor" evidence="1">
    <location>
        <position position="89"/>
    </location>
</feature>
<feature type="active site" description="Schiff-base intermediate with acetaldehyde" evidence="1">
    <location>
        <position position="151"/>
    </location>
</feature>
<feature type="active site" description="Proton donor/acceptor" evidence="1">
    <location>
        <position position="180"/>
    </location>
</feature>
<keyword id="KW-0963">Cytoplasm</keyword>
<keyword id="KW-0456">Lyase</keyword>
<keyword id="KW-0704">Schiff base</keyword>
<organism>
    <name type="scientific">Clostridium botulinum (strain Loch Maree / Type A3)</name>
    <dbReference type="NCBI Taxonomy" id="498214"/>
    <lineage>
        <taxon>Bacteria</taxon>
        <taxon>Bacillati</taxon>
        <taxon>Bacillota</taxon>
        <taxon>Clostridia</taxon>
        <taxon>Eubacteriales</taxon>
        <taxon>Clostridiaceae</taxon>
        <taxon>Clostridium</taxon>
    </lineage>
</organism>